<comment type="function">
    <text evidence="1">Catalyzes the oxidation of either pyridoxine 5'-phosphate (PNP) or pyridoxamine 5'-phosphate (PMP) into pyridoxal 5'-phosphate (PLP).</text>
</comment>
<comment type="catalytic activity">
    <reaction evidence="1">
        <text>pyridoxamine 5'-phosphate + O2 + H2O = pyridoxal 5'-phosphate + H2O2 + NH4(+)</text>
        <dbReference type="Rhea" id="RHEA:15817"/>
        <dbReference type="ChEBI" id="CHEBI:15377"/>
        <dbReference type="ChEBI" id="CHEBI:15379"/>
        <dbReference type="ChEBI" id="CHEBI:16240"/>
        <dbReference type="ChEBI" id="CHEBI:28938"/>
        <dbReference type="ChEBI" id="CHEBI:58451"/>
        <dbReference type="ChEBI" id="CHEBI:597326"/>
        <dbReference type="EC" id="1.4.3.5"/>
    </reaction>
</comment>
<comment type="catalytic activity">
    <reaction evidence="1">
        <text>pyridoxine 5'-phosphate + O2 = pyridoxal 5'-phosphate + H2O2</text>
        <dbReference type="Rhea" id="RHEA:15149"/>
        <dbReference type="ChEBI" id="CHEBI:15379"/>
        <dbReference type="ChEBI" id="CHEBI:16240"/>
        <dbReference type="ChEBI" id="CHEBI:58589"/>
        <dbReference type="ChEBI" id="CHEBI:597326"/>
        <dbReference type="EC" id="1.4.3.5"/>
    </reaction>
</comment>
<comment type="cofactor">
    <cofactor evidence="1">
        <name>FMN</name>
        <dbReference type="ChEBI" id="CHEBI:58210"/>
    </cofactor>
    <text evidence="1">Binds 1 FMN per subunit.</text>
</comment>
<comment type="pathway">
    <text evidence="1">Cofactor metabolism; pyridoxal 5'-phosphate salvage; pyridoxal 5'-phosphate from pyridoxamine 5'-phosphate: step 1/1.</text>
</comment>
<comment type="pathway">
    <text evidence="1">Cofactor metabolism; pyridoxal 5'-phosphate salvage; pyridoxal 5'-phosphate from pyridoxine 5'-phosphate: step 1/1.</text>
</comment>
<comment type="subunit">
    <text evidence="1">Homodimer.</text>
</comment>
<comment type="similarity">
    <text evidence="1">Belongs to the pyridoxamine 5'-phosphate oxidase family.</text>
</comment>
<accession>Q7P203</accession>
<protein>
    <recommendedName>
        <fullName evidence="1">Pyridoxine/pyridoxamine 5'-phosphate oxidase</fullName>
        <ecNumber evidence="1">1.4.3.5</ecNumber>
    </recommendedName>
    <alternativeName>
        <fullName evidence="1">PNP/PMP oxidase</fullName>
        <shortName evidence="1">PNPOx</shortName>
    </alternativeName>
    <alternativeName>
        <fullName evidence="1">Pyridoxal 5'-phosphate synthase</fullName>
    </alternativeName>
</protein>
<reference key="1">
    <citation type="journal article" date="2003" name="Proc. Natl. Acad. Sci. U.S.A.">
        <title>The complete genome sequence of Chromobacterium violaceum reveals remarkable and exploitable bacterial adaptability.</title>
        <authorList>
            <person name="Vasconcelos A.T.R."/>
            <person name="de Almeida D.F."/>
            <person name="Hungria M."/>
            <person name="Guimaraes C.T."/>
            <person name="Antonio R.V."/>
            <person name="Almeida F.C."/>
            <person name="de Almeida L.G.P."/>
            <person name="de Almeida R."/>
            <person name="Alves-Gomes J.A."/>
            <person name="Andrade E.M."/>
            <person name="Araripe J."/>
            <person name="de Araujo M.F.F."/>
            <person name="Astolfi-Filho S."/>
            <person name="Azevedo V."/>
            <person name="Baptista A.J."/>
            <person name="Bataus L.A.M."/>
            <person name="Batista J.S."/>
            <person name="Belo A."/>
            <person name="van den Berg C."/>
            <person name="Bogo M."/>
            <person name="Bonatto S."/>
            <person name="Bordignon J."/>
            <person name="Brigido M.M."/>
            <person name="Brito C.A."/>
            <person name="Brocchi M."/>
            <person name="Burity H.A."/>
            <person name="Camargo A.A."/>
            <person name="Cardoso D.D.P."/>
            <person name="Carneiro N.P."/>
            <person name="Carraro D.M."/>
            <person name="Carvalho C.M.B."/>
            <person name="Cascardo J.C.M."/>
            <person name="Cavada B.S."/>
            <person name="Chueire L.M.O."/>
            <person name="Creczynski-Pasa T.B."/>
            <person name="Cunha-Junior N.C."/>
            <person name="Fagundes N."/>
            <person name="Falcao C.L."/>
            <person name="Fantinatti F."/>
            <person name="Farias I.P."/>
            <person name="Felipe M.S.S."/>
            <person name="Ferrari L.P."/>
            <person name="Ferro J.A."/>
            <person name="Ferro M.I.T."/>
            <person name="Franco G.R."/>
            <person name="Freitas N.S.A."/>
            <person name="Furlan L.R."/>
            <person name="Gazzinelli R.T."/>
            <person name="Gomes E.A."/>
            <person name="Goncalves P.R."/>
            <person name="Grangeiro T.B."/>
            <person name="Grattapaglia D."/>
            <person name="Grisard E.C."/>
            <person name="Hanna E.S."/>
            <person name="Jardim S.N."/>
            <person name="Laurino J."/>
            <person name="Leoi L.C.T."/>
            <person name="Lima L.F.A."/>
            <person name="Loureiro M.F."/>
            <person name="Lyra M.C.C.P."/>
            <person name="Madeira H.M.F."/>
            <person name="Manfio G.P."/>
            <person name="Maranhao A.Q."/>
            <person name="Martins W.S."/>
            <person name="di Mauro S.M.Z."/>
            <person name="de Medeiros S.R.B."/>
            <person name="Meissner R.V."/>
            <person name="Moreira M.A.M."/>
            <person name="Nascimento F.F."/>
            <person name="Nicolas M.F."/>
            <person name="Oliveira J.G."/>
            <person name="Oliveira S.C."/>
            <person name="Paixao R.F.C."/>
            <person name="Parente J.A."/>
            <person name="Pedrosa F.O."/>
            <person name="Pena S.D.J."/>
            <person name="Pereira J.O."/>
            <person name="Pereira M."/>
            <person name="Pinto L.S.R.C."/>
            <person name="Pinto L.S."/>
            <person name="Porto J.I.R."/>
            <person name="Potrich D.P."/>
            <person name="Ramalho-Neto C.E."/>
            <person name="Reis A.M.M."/>
            <person name="Rigo L.U."/>
            <person name="Rondinelli E."/>
            <person name="Santos E.B.P."/>
            <person name="Santos F.R."/>
            <person name="Schneider M.P.C."/>
            <person name="Seuanez H.N."/>
            <person name="Silva A.M.R."/>
            <person name="da Silva A.L.C."/>
            <person name="Silva D.W."/>
            <person name="Silva R."/>
            <person name="Simoes I.C."/>
            <person name="Simon D."/>
            <person name="Soares C.M.A."/>
            <person name="Soares R.B.A."/>
            <person name="Souza E.M."/>
            <person name="Souza K.R.L."/>
            <person name="Souza R.C."/>
            <person name="Steffens M.B.R."/>
            <person name="Steindel M."/>
            <person name="Teixeira S.R."/>
            <person name="Urmenyi T."/>
            <person name="Vettore A."/>
            <person name="Wassem R."/>
            <person name="Zaha A."/>
            <person name="Simpson A.J.G."/>
        </authorList>
    </citation>
    <scope>NUCLEOTIDE SEQUENCE [LARGE SCALE GENOMIC DNA]</scope>
    <source>
        <strain>ATCC 12472 / DSM 30191 / JCM 1249 / CCUG 213 / NBRC 12614 / NCIMB 9131 / NCTC 9757 / MK</strain>
    </source>
</reference>
<organism>
    <name type="scientific">Chromobacterium violaceum (strain ATCC 12472 / DSM 30191 / JCM 1249 / CCUG 213 / NBRC 12614 / NCIMB 9131 / NCTC 9757 / MK)</name>
    <dbReference type="NCBI Taxonomy" id="243365"/>
    <lineage>
        <taxon>Bacteria</taxon>
        <taxon>Pseudomonadati</taxon>
        <taxon>Pseudomonadota</taxon>
        <taxon>Betaproteobacteria</taxon>
        <taxon>Neisseriales</taxon>
        <taxon>Chromobacteriaceae</taxon>
        <taxon>Chromobacterium</taxon>
    </lineage>
</organism>
<gene>
    <name evidence="1" type="primary">pdxH</name>
    <name type="ordered locus">CV_0059</name>
</gene>
<keyword id="KW-0285">Flavoprotein</keyword>
<keyword id="KW-0288">FMN</keyword>
<keyword id="KW-0560">Oxidoreductase</keyword>
<keyword id="KW-0664">Pyridoxine biosynthesis</keyword>
<keyword id="KW-1185">Reference proteome</keyword>
<dbReference type="EC" id="1.4.3.5" evidence="1"/>
<dbReference type="EMBL" id="AE016825">
    <property type="protein sequence ID" value="AAQ57738.1"/>
    <property type="molecule type" value="Genomic_DNA"/>
</dbReference>
<dbReference type="RefSeq" id="WP_011133614.1">
    <property type="nucleotide sequence ID" value="NC_005085.1"/>
</dbReference>
<dbReference type="SMR" id="Q7P203"/>
<dbReference type="STRING" id="243365.CV_0059"/>
<dbReference type="KEGG" id="cvi:CV_0059"/>
<dbReference type="eggNOG" id="COG0259">
    <property type="taxonomic scope" value="Bacteria"/>
</dbReference>
<dbReference type="HOGENOM" id="CLU_032263_2_2_4"/>
<dbReference type="OrthoDB" id="9780392at2"/>
<dbReference type="UniPathway" id="UPA01068">
    <property type="reaction ID" value="UER00304"/>
</dbReference>
<dbReference type="UniPathway" id="UPA01068">
    <property type="reaction ID" value="UER00305"/>
</dbReference>
<dbReference type="Proteomes" id="UP000001424">
    <property type="component" value="Chromosome"/>
</dbReference>
<dbReference type="GO" id="GO:0010181">
    <property type="term" value="F:FMN binding"/>
    <property type="evidence" value="ECO:0007669"/>
    <property type="project" value="UniProtKB-UniRule"/>
</dbReference>
<dbReference type="GO" id="GO:0004733">
    <property type="term" value="F:pyridoxamine phosphate oxidase activity"/>
    <property type="evidence" value="ECO:0007669"/>
    <property type="project" value="UniProtKB-UniRule"/>
</dbReference>
<dbReference type="GO" id="GO:0008615">
    <property type="term" value="P:pyridoxine biosynthetic process"/>
    <property type="evidence" value="ECO:0007669"/>
    <property type="project" value="UniProtKB-KW"/>
</dbReference>
<dbReference type="Gene3D" id="2.30.110.10">
    <property type="entry name" value="Electron Transport, Fmn-binding Protein, Chain A"/>
    <property type="match status" value="1"/>
</dbReference>
<dbReference type="HAMAP" id="MF_01629">
    <property type="entry name" value="PdxH"/>
    <property type="match status" value="1"/>
</dbReference>
<dbReference type="InterPro" id="IPR000659">
    <property type="entry name" value="Pyridox_Oxase"/>
</dbReference>
<dbReference type="InterPro" id="IPR019740">
    <property type="entry name" value="Pyridox_Oxase_CS"/>
</dbReference>
<dbReference type="InterPro" id="IPR011576">
    <property type="entry name" value="Pyridox_Oxase_N"/>
</dbReference>
<dbReference type="InterPro" id="IPR019576">
    <property type="entry name" value="Pyridoxamine_oxidase_dimer_C"/>
</dbReference>
<dbReference type="InterPro" id="IPR012349">
    <property type="entry name" value="Split_barrel_FMN-bd"/>
</dbReference>
<dbReference type="NCBIfam" id="TIGR00558">
    <property type="entry name" value="pdxH"/>
    <property type="match status" value="1"/>
</dbReference>
<dbReference type="NCBIfam" id="NF004231">
    <property type="entry name" value="PRK05679.1"/>
    <property type="match status" value="1"/>
</dbReference>
<dbReference type="PANTHER" id="PTHR10851:SF0">
    <property type="entry name" value="PYRIDOXINE-5'-PHOSPHATE OXIDASE"/>
    <property type="match status" value="1"/>
</dbReference>
<dbReference type="PANTHER" id="PTHR10851">
    <property type="entry name" value="PYRIDOXINE-5-PHOSPHATE OXIDASE"/>
    <property type="match status" value="1"/>
</dbReference>
<dbReference type="Pfam" id="PF10590">
    <property type="entry name" value="PNP_phzG_C"/>
    <property type="match status" value="1"/>
</dbReference>
<dbReference type="Pfam" id="PF01243">
    <property type="entry name" value="PNPOx_N"/>
    <property type="match status" value="1"/>
</dbReference>
<dbReference type="PIRSF" id="PIRSF000190">
    <property type="entry name" value="Pyd_amn-ph_oxd"/>
    <property type="match status" value="1"/>
</dbReference>
<dbReference type="SUPFAM" id="SSF50475">
    <property type="entry name" value="FMN-binding split barrel"/>
    <property type="match status" value="1"/>
</dbReference>
<dbReference type="PROSITE" id="PS01064">
    <property type="entry name" value="PYRIDOX_OXIDASE"/>
    <property type="match status" value="1"/>
</dbReference>
<feature type="chain" id="PRO_0000167698" description="Pyridoxine/pyridoxamine 5'-phosphate oxidase">
    <location>
        <begin position="1"/>
        <end position="213"/>
    </location>
</feature>
<feature type="binding site" evidence="1">
    <location>
        <begin position="9"/>
        <end position="12"/>
    </location>
    <ligand>
        <name>substrate</name>
    </ligand>
</feature>
<feature type="binding site" evidence="1">
    <location>
        <begin position="62"/>
        <end position="67"/>
    </location>
    <ligand>
        <name>FMN</name>
        <dbReference type="ChEBI" id="CHEBI:58210"/>
    </ligand>
</feature>
<feature type="binding site" evidence="1">
    <location>
        <position position="67"/>
    </location>
    <ligand>
        <name>substrate</name>
    </ligand>
</feature>
<feature type="binding site" evidence="1">
    <location>
        <begin position="77"/>
        <end position="78"/>
    </location>
    <ligand>
        <name>FMN</name>
        <dbReference type="ChEBI" id="CHEBI:58210"/>
    </ligand>
</feature>
<feature type="binding site" evidence="1">
    <location>
        <position position="83"/>
    </location>
    <ligand>
        <name>FMN</name>
        <dbReference type="ChEBI" id="CHEBI:58210"/>
    </ligand>
</feature>
<feature type="binding site" evidence="1">
    <location>
        <position position="84"/>
    </location>
    <ligand>
        <name>FMN</name>
        <dbReference type="ChEBI" id="CHEBI:58210"/>
    </ligand>
</feature>
<feature type="binding site" evidence="1">
    <location>
        <position position="106"/>
    </location>
    <ligand>
        <name>FMN</name>
        <dbReference type="ChEBI" id="CHEBI:58210"/>
    </ligand>
</feature>
<feature type="binding site" evidence="1">
    <location>
        <position position="124"/>
    </location>
    <ligand>
        <name>substrate</name>
    </ligand>
</feature>
<feature type="binding site" evidence="1">
    <location>
        <position position="128"/>
    </location>
    <ligand>
        <name>substrate</name>
    </ligand>
</feature>
<feature type="binding site" evidence="1">
    <location>
        <position position="132"/>
    </location>
    <ligand>
        <name>substrate</name>
    </ligand>
</feature>
<feature type="binding site" evidence="1">
    <location>
        <begin position="141"/>
        <end position="142"/>
    </location>
    <ligand>
        <name>FMN</name>
        <dbReference type="ChEBI" id="CHEBI:58210"/>
    </ligand>
</feature>
<feature type="binding site" evidence="1">
    <location>
        <position position="185"/>
    </location>
    <ligand>
        <name>FMN</name>
        <dbReference type="ChEBI" id="CHEBI:58210"/>
    </ligand>
</feature>
<feature type="binding site" evidence="1">
    <location>
        <begin position="191"/>
        <end position="193"/>
    </location>
    <ligand>
        <name>substrate</name>
    </ligand>
</feature>
<feature type="binding site" evidence="1">
    <location>
        <position position="195"/>
    </location>
    <ligand>
        <name>FMN</name>
        <dbReference type="ChEBI" id="CHEBI:58210"/>
    </ligand>
</feature>
<sequence length="213" mass="23831">MSLNLADIRLEYSKKELSPEDCLPDAVAQFEIWLNEAIAAQVPEPTAMNLAAIGADGRPSSRIVLLKGVEDGQLLFYTNYQSRKGQALEANPYVALNFFWPELERQVRIEGKAARVAPEVSDAYFASRPYTSRLGAWASEQSREIASKATLVTRAAMFGARYPINVPRPPHWGGFAVVPDRVEFWQGRPSRLHDRVLYTLQPDGGWSRSRLAP</sequence>
<evidence type="ECO:0000255" key="1">
    <source>
        <dbReference type="HAMAP-Rule" id="MF_01629"/>
    </source>
</evidence>
<name>PDXH_CHRVO</name>
<proteinExistence type="inferred from homology"/>